<proteinExistence type="evidence at protein level"/>
<feature type="chain" id="PRO_0000174017" description="Pesticidal crystal protein Cry1Aa">
    <location>
        <begin position="1"/>
        <end position="1176"/>
    </location>
</feature>
<protein>
    <recommendedName>
        <fullName>Pesticidal crystal protein Cry1Aa</fullName>
    </recommendedName>
    <alternativeName>
        <fullName>133 kDa crystal protein</fullName>
    </alternativeName>
    <alternativeName>
        <fullName>Crystaline entomocidal protoxin</fullName>
    </alternativeName>
    <alternativeName>
        <fullName>Insecticidal delta-endotoxin CryIA(a)</fullName>
    </alternativeName>
</protein>
<sequence>MDNNPNINECIPYNCLSNPEVEVLGGERIETGYTPIDISLSLTQFLLSEFVPGAGFVLGLVDIIWGIFGPSQWDAFLVQIEQLINQRIEEFARNQAISRLEGLSNLYQIYAESFREWEADPTNPALREEMRIQFNDMNSALTTAIPLFAVQNYQVPLLSVYVQAANLHLSVLRDVSVFGQRWGFDAATINSRYNDLTRLIGNYTDYAVRWYNTGLERVWGPDSRDWVRYNQFRRELTLTVLDIVALFSNYDSRRYPIRTVSQLTREIYTNPVLENFDGSFRGMAQRIEQNIRQPHLMDILNSITIYTDVHRGFNYWSGHQITASPVGFSGPEFAFPLFGNAGNAAPPVLVSLTGLGIFRTLSSPLYRRIILGSGPNNQELFVLDGTEFSFASLTTNLPSTIYRQRGTVDSLDVIPPQDNSVPPRAGFSHRLSHVTMLSQAAGAVYTLRAPTFSWQHRSAEFNNIIPSSQITQIPLTKSTNLGSGTSVVKGPGFTGGDILRRTSPGQISTLRVNITAPLSQRYRVRIRYASTTNLQFHTSIDGRPINQGNFSATMSSGSNLQSGSFRTVGFTTPFNFSNGSSVFTLSAHVFNSGNEVYIDRIEFVPAEVTFEAEYDLERAQKAVNELFTSSNQIGLKTDVTDYHIDQVSNLVECLSDEFCLDEKQELSEKVKHAKRLSDERNLLQDPNFRGINRQLDRGWRGSTDITIQGGDDVFKENYVTLLGTFDECYPTYLYQKIDESKLKAYTRYQLRGYIEDSQDLEIYLIRYNAKHETVNVPGTGSLWPLSAQSPIGKCGEPNRCAPHLEWNPDLDCSCRDGEKCAHHSHHFSLDIDVGCTDLNEDLGVWVIFKIKTQDGHARLGNLEFLEEKPLVGEALARVKRAEKKWRDKREKLEWETNIVYKEAKESVDALFVNSQYDQLQADTNIAMIHAADKRVHSIREAYLPELSVIPGVNAAIFEELEGRIFTAFSLYDARNVIKNGDFNNGLSCWNVKGHVDVEEQNNQRSVLVVPEWEAEVSQEVRVCPGRGYILRVTAYKEGYGEGCVTIHEIENNTDELKFSNCVEEEIYPNNTVTCNDYTVNQEEYGGAYTSRNRGYNEAPSVPADYASVYEEKSYTDGRRENPCEFNRGYRDYTPLPVGYVTKELEYFPETDKVWIEIGETEGTFIVDSVELLLMEE</sequence>
<organism>
    <name type="scientific">Bacillus thuringiensis subsp. aizawai</name>
    <dbReference type="NCBI Taxonomy" id="1433"/>
    <lineage>
        <taxon>Bacteria</taxon>
        <taxon>Bacillati</taxon>
        <taxon>Bacillota</taxon>
        <taxon>Bacilli</taxon>
        <taxon>Bacillales</taxon>
        <taxon>Bacillaceae</taxon>
        <taxon>Bacillus</taxon>
        <taxon>Bacillus cereus group</taxon>
    </lineage>
</organism>
<name>CR1AA_BACTA</name>
<comment type="function">
    <text>Promotes colloidosmotic lysis by binding to the midgut epithelial cells of many lepidopteran larvae.</text>
</comment>
<comment type="developmental stage">
    <text>The crystal protein is produced during sporulation and is accumulated both as an inclusion and as part of the spore coat.</text>
</comment>
<comment type="miscellaneous">
    <text>Toxic segment of the protein is located in the N-terminus.</text>
</comment>
<comment type="similarity">
    <text evidence="1">Belongs to the delta endotoxin family.</text>
</comment>
<gene>
    <name type="primary">cry1Aa</name>
    <name type="synonym">cry-1-1</name>
    <name type="synonym">cry1A(a)</name>
    <name type="synonym">cryA</name>
    <name type="synonym">crybns3-1</name>
    <name type="synonym">cryIA(a)</name>
    <name type="synonym">icp</name>
</gene>
<accession>P0A367</accession>
<accession>P02965</accession>
<accession>P09664</accession>
<accession>P09665</accession>
<accession>P16478</accession>
<accession>Q9RED5</accession>
<keyword id="KW-0002">3D-structure</keyword>
<keyword id="KW-0749">Sporulation</keyword>
<keyword id="KW-0800">Toxin</keyword>
<keyword id="KW-0843">Virulence</keyword>
<evidence type="ECO:0000305" key="1"/>
<dbReference type="EMBL" id="D00348">
    <property type="protein sequence ID" value="BAA00257.1"/>
    <property type="molecule type" value="Genomic_DNA"/>
</dbReference>
<dbReference type="PIR" id="JT0241">
    <property type="entry name" value="JT0241"/>
</dbReference>
<dbReference type="RefSeq" id="WP_000369823.1">
    <property type="nucleotide sequence ID" value="NZ_NFEU01000196.1"/>
</dbReference>
<dbReference type="PDB" id="8W7N">
    <property type="method" value="X-ray"/>
    <property type="resolution" value="3.60 A"/>
    <property type="chains" value="A=33-1176"/>
</dbReference>
<dbReference type="PDBsum" id="8W7N"/>
<dbReference type="SMR" id="P0A367"/>
<dbReference type="TCDB" id="1.C.2.1.1">
    <property type="family name" value="the channel-forming Delta-endotoxin insecticidal crystal protein (icp) family"/>
</dbReference>
<dbReference type="GO" id="GO:0005102">
    <property type="term" value="F:signaling receptor binding"/>
    <property type="evidence" value="ECO:0007669"/>
    <property type="project" value="InterPro"/>
</dbReference>
<dbReference type="GO" id="GO:0090729">
    <property type="term" value="F:toxin activity"/>
    <property type="evidence" value="ECO:0007669"/>
    <property type="project" value="UniProtKB-KW"/>
</dbReference>
<dbReference type="GO" id="GO:0030435">
    <property type="term" value="P:sporulation resulting in formation of a cellular spore"/>
    <property type="evidence" value="ECO:0007669"/>
    <property type="project" value="UniProtKB-KW"/>
</dbReference>
<dbReference type="GO" id="GO:0001907">
    <property type="term" value="P:symbiont-mediated killing of host cell"/>
    <property type="evidence" value="ECO:0007669"/>
    <property type="project" value="InterPro"/>
</dbReference>
<dbReference type="CDD" id="cd04085">
    <property type="entry name" value="delta_endotoxin_C"/>
    <property type="match status" value="1"/>
</dbReference>
<dbReference type="Gene3D" id="2.60.120.260">
    <property type="entry name" value="Galactose-binding domain-like"/>
    <property type="match status" value="2"/>
</dbReference>
<dbReference type="Gene3D" id="2.100.10.10">
    <property type="entry name" value="Pesticidal crystal protein, central domain"/>
    <property type="match status" value="1"/>
</dbReference>
<dbReference type="Gene3D" id="1.20.190.10">
    <property type="entry name" value="Pesticidal crystal protein, N-terminal domain"/>
    <property type="match status" value="1"/>
</dbReference>
<dbReference type="InterPro" id="IPR048645">
    <property type="entry name" value="Cry1Ac-like_dom-VII"/>
</dbReference>
<dbReference type="InterPro" id="IPR041587">
    <property type="entry name" value="Cry_V"/>
</dbReference>
<dbReference type="InterPro" id="IPR008979">
    <property type="entry name" value="Galactose-bd-like_sf"/>
</dbReference>
<dbReference type="InterPro" id="IPR038979">
    <property type="entry name" value="Pest_crys"/>
</dbReference>
<dbReference type="InterPro" id="IPR054544">
    <property type="entry name" value="Pest_crys_Cry1Aa_dom-IV"/>
</dbReference>
<dbReference type="InterPro" id="IPR005638">
    <property type="entry name" value="Pest_crys_dom-III"/>
</dbReference>
<dbReference type="InterPro" id="IPR005639">
    <property type="entry name" value="Pest_crys_dom_I"/>
</dbReference>
<dbReference type="InterPro" id="IPR036716">
    <property type="entry name" value="Pest_crys_N_sf"/>
</dbReference>
<dbReference type="InterPro" id="IPR036399">
    <property type="entry name" value="Pest_cryst_cen_dom_sf"/>
</dbReference>
<dbReference type="InterPro" id="IPR001178">
    <property type="entry name" value="Pest_cryst_dom_II"/>
</dbReference>
<dbReference type="PANTHER" id="PTHR37003">
    <property type="entry name" value="ENDOTOXIN_N DOMAIN-CONTAINING PROTEIN-RELATED"/>
    <property type="match status" value="1"/>
</dbReference>
<dbReference type="PANTHER" id="PTHR37003:SF2">
    <property type="entry name" value="PESTICIDAL CRYSTAL PROTEIN N-TERMINAL DOMAIN-CONTAINING PROTEIN"/>
    <property type="match status" value="1"/>
</dbReference>
<dbReference type="Pfam" id="PF17997">
    <property type="entry name" value="Cry1Ac_D5"/>
    <property type="match status" value="1"/>
</dbReference>
<dbReference type="Pfam" id="PF21463">
    <property type="entry name" value="Cry1Ac_dom-VII"/>
    <property type="match status" value="1"/>
</dbReference>
<dbReference type="Pfam" id="PF03944">
    <property type="entry name" value="Endotoxin_C"/>
    <property type="match status" value="1"/>
</dbReference>
<dbReference type="Pfam" id="PF18449">
    <property type="entry name" value="Endotoxin_C2"/>
    <property type="match status" value="1"/>
</dbReference>
<dbReference type="Pfam" id="PF00555">
    <property type="entry name" value="Endotoxin_M"/>
    <property type="match status" value="1"/>
</dbReference>
<dbReference type="Pfam" id="PF03945">
    <property type="entry name" value="Endotoxin_N"/>
    <property type="match status" value="1"/>
</dbReference>
<dbReference type="SUPFAM" id="SSF51096">
    <property type="entry name" value="delta-Endotoxin (insectocide), middle domain"/>
    <property type="match status" value="1"/>
</dbReference>
<dbReference type="SUPFAM" id="SSF56849">
    <property type="entry name" value="delta-Endotoxin (insectocide), N-terminal domain"/>
    <property type="match status" value="1"/>
</dbReference>
<dbReference type="SUPFAM" id="SSF49785">
    <property type="entry name" value="Galactose-binding domain-like"/>
    <property type="match status" value="1"/>
</dbReference>
<reference key="1">
    <citation type="journal article" date="1988" name="Agric. Biol. Chem.">
        <title>Cloning and expression in Escherichia coli of the 135-kDa insecticidal protein gene from Bacillus thuringiensis subsp. aizawai IPL7.</title>
        <authorList>
            <person name="Simizu M."/>
            <person name="Oshie K."/>
            <person name="Nakamura K."/>
            <person name="Takada Y."/>
            <person name="Oeda K."/>
        </authorList>
    </citation>
    <scope>NUCLEOTIDE SEQUENCE [GENOMIC DNA]</scope>
    <source>
        <strain>IPL7</strain>
    </source>
</reference>